<proteinExistence type="inferred from homology"/>
<sequence>MSAVPLRNAKVAASGVRSVSVLGATGSIGDSTMDLLRASPERYQVEALTANTNVAGLAKLAREFNARFVAVADPARLSELRAALAGTGIACGAGDSAIVEAAERPADWVMAAVAGAAGLKPTLAAVDRGAHVALANKECLVCAGEFFMDRAAKAGATILPADSEHNALFQALASGNRDELTKVIITASGGPFRTWAAADIEQATLAQALKHPNWSMGQKITIDSASMMNKGLEVIEASWLFALSPDEIDVVVHPQSIIHGMVEFSDRSVVAQLGSPDMRTPIAHCLGWPDRIVGRAAPLDLAKIGTLTFEAPDYARFPGLKLAYEALRAGNGATTVYNAANEVAVAAFIAQRIRFGAIARLVEETMSSWIRAGNQAPLSCADDAIAVDHSARNMAAALLPQIAAKAS</sequence>
<organism>
    <name type="scientific">Rhodopseudomonas palustris (strain BisB18)</name>
    <dbReference type="NCBI Taxonomy" id="316056"/>
    <lineage>
        <taxon>Bacteria</taxon>
        <taxon>Pseudomonadati</taxon>
        <taxon>Pseudomonadota</taxon>
        <taxon>Alphaproteobacteria</taxon>
        <taxon>Hyphomicrobiales</taxon>
        <taxon>Nitrobacteraceae</taxon>
        <taxon>Rhodopseudomonas</taxon>
    </lineage>
</organism>
<dbReference type="EC" id="1.1.1.267" evidence="1"/>
<dbReference type="EMBL" id="CP000301">
    <property type="protein sequence ID" value="ABD87993.1"/>
    <property type="molecule type" value="Genomic_DNA"/>
</dbReference>
<dbReference type="SMR" id="Q215E3"/>
<dbReference type="STRING" id="316056.RPC_2442"/>
<dbReference type="KEGG" id="rpc:RPC_2442"/>
<dbReference type="eggNOG" id="COG0743">
    <property type="taxonomic scope" value="Bacteria"/>
</dbReference>
<dbReference type="HOGENOM" id="CLU_035714_4_0_5"/>
<dbReference type="OrthoDB" id="9806546at2"/>
<dbReference type="UniPathway" id="UPA00056">
    <property type="reaction ID" value="UER00092"/>
</dbReference>
<dbReference type="GO" id="GO:0030604">
    <property type="term" value="F:1-deoxy-D-xylulose-5-phosphate reductoisomerase activity"/>
    <property type="evidence" value="ECO:0007669"/>
    <property type="project" value="UniProtKB-UniRule"/>
</dbReference>
<dbReference type="GO" id="GO:0030145">
    <property type="term" value="F:manganese ion binding"/>
    <property type="evidence" value="ECO:0007669"/>
    <property type="project" value="TreeGrafter"/>
</dbReference>
<dbReference type="GO" id="GO:0070402">
    <property type="term" value="F:NADPH binding"/>
    <property type="evidence" value="ECO:0007669"/>
    <property type="project" value="InterPro"/>
</dbReference>
<dbReference type="GO" id="GO:0051484">
    <property type="term" value="P:isopentenyl diphosphate biosynthetic process, methylerythritol 4-phosphate pathway involved in terpenoid biosynthetic process"/>
    <property type="evidence" value="ECO:0007669"/>
    <property type="project" value="TreeGrafter"/>
</dbReference>
<dbReference type="FunFam" id="3.40.50.720:FF:000045">
    <property type="entry name" value="1-deoxy-D-xylulose 5-phosphate reductoisomerase"/>
    <property type="match status" value="1"/>
</dbReference>
<dbReference type="Gene3D" id="1.10.1740.10">
    <property type="match status" value="1"/>
</dbReference>
<dbReference type="Gene3D" id="3.40.50.720">
    <property type="entry name" value="NAD(P)-binding Rossmann-like Domain"/>
    <property type="match status" value="1"/>
</dbReference>
<dbReference type="HAMAP" id="MF_00183">
    <property type="entry name" value="DXP_reductoisom"/>
    <property type="match status" value="1"/>
</dbReference>
<dbReference type="InterPro" id="IPR003821">
    <property type="entry name" value="DXP_reductoisomerase"/>
</dbReference>
<dbReference type="InterPro" id="IPR013644">
    <property type="entry name" value="DXP_reductoisomerase_C"/>
</dbReference>
<dbReference type="InterPro" id="IPR013512">
    <property type="entry name" value="DXP_reductoisomerase_N"/>
</dbReference>
<dbReference type="InterPro" id="IPR026877">
    <property type="entry name" value="DXPR_C"/>
</dbReference>
<dbReference type="InterPro" id="IPR036169">
    <property type="entry name" value="DXPR_C_sf"/>
</dbReference>
<dbReference type="InterPro" id="IPR036291">
    <property type="entry name" value="NAD(P)-bd_dom_sf"/>
</dbReference>
<dbReference type="NCBIfam" id="TIGR00243">
    <property type="entry name" value="Dxr"/>
    <property type="match status" value="1"/>
</dbReference>
<dbReference type="PANTHER" id="PTHR30525">
    <property type="entry name" value="1-DEOXY-D-XYLULOSE 5-PHOSPHATE REDUCTOISOMERASE"/>
    <property type="match status" value="1"/>
</dbReference>
<dbReference type="PANTHER" id="PTHR30525:SF0">
    <property type="entry name" value="1-DEOXY-D-XYLULOSE 5-PHOSPHATE REDUCTOISOMERASE, CHLOROPLASTIC"/>
    <property type="match status" value="1"/>
</dbReference>
<dbReference type="Pfam" id="PF08436">
    <property type="entry name" value="DXP_redisom_C"/>
    <property type="match status" value="1"/>
</dbReference>
<dbReference type="Pfam" id="PF02670">
    <property type="entry name" value="DXP_reductoisom"/>
    <property type="match status" value="1"/>
</dbReference>
<dbReference type="Pfam" id="PF13288">
    <property type="entry name" value="DXPR_C"/>
    <property type="match status" value="1"/>
</dbReference>
<dbReference type="PIRSF" id="PIRSF006205">
    <property type="entry name" value="Dxp_reductismrs"/>
    <property type="match status" value="1"/>
</dbReference>
<dbReference type="SUPFAM" id="SSF69055">
    <property type="entry name" value="1-deoxy-D-xylulose-5-phosphate reductoisomerase, C-terminal domain"/>
    <property type="match status" value="1"/>
</dbReference>
<dbReference type="SUPFAM" id="SSF55347">
    <property type="entry name" value="Glyceraldehyde-3-phosphate dehydrogenase-like, C-terminal domain"/>
    <property type="match status" value="1"/>
</dbReference>
<dbReference type="SUPFAM" id="SSF51735">
    <property type="entry name" value="NAD(P)-binding Rossmann-fold domains"/>
    <property type="match status" value="1"/>
</dbReference>
<evidence type="ECO:0000255" key="1">
    <source>
        <dbReference type="HAMAP-Rule" id="MF_00183"/>
    </source>
</evidence>
<gene>
    <name evidence="1" type="primary">dxr</name>
    <name type="ordered locus">RPC_2442</name>
</gene>
<reference key="1">
    <citation type="submission" date="2006-03" db="EMBL/GenBank/DDBJ databases">
        <title>Complete sequence of Rhodopseudomonas palustris BisB18.</title>
        <authorList>
            <consortium name="US DOE Joint Genome Institute"/>
            <person name="Copeland A."/>
            <person name="Lucas S."/>
            <person name="Lapidus A."/>
            <person name="Barry K."/>
            <person name="Detter J.C."/>
            <person name="Glavina del Rio T."/>
            <person name="Hammon N."/>
            <person name="Israni S."/>
            <person name="Dalin E."/>
            <person name="Tice H."/>
            <person name="Pitluck S."/>
            <person name="Chain P."/>
            <person name="Malfatti S."/>
            <person name="Shin M."/>
            <person name="Vergez L."/>
            <person name="Schmutz J."/>
            <person name="Larimer F."/>
            <person name="Land M."/>
            <person name="Hauser L."/>
            <person name="Pelletier D.A."/>
            <person name="Kyrpides N."/>
            <person name="Anderson I."/>
            <person name="Oda Y."/>
            <person name="Harwood C.S."/>
            <person name="Richardson P."/>
        </authorList>
    </citation>
    <scope>NUCLEOTIDE SEQUENCE [LARGE SCALE GENOMIC DNA]</scope>
    <source>
        <strain>BisB18</strain>
    </source>
</reference>
<comment type="function">
    <text evidence="1">Catalyzes the NADPH-dependent rearrangement and reduction of 1-deoxy-D-xylulose-5-phosphate (DXP) to 2-C-methyl-D-erythritol 4-phosphate (MEP).</text>
</comment>
<comment type="catalytic activity">
    <reaction evidence="1">
        <text>2-C-methyl-D-erythritol 4-phosphate + NADP(+) = 1-deoxy-D-xylulose 5-phosphate + NADPH + H(+)</text>
        <dbReference type="Rhea" id="RHEA:13717"/>
        <dbReference type="ChEBI" id="CHEBI:15378"/>
        <dbReference type="ChEBI" id="CHEBI:57783"/>
        <dbReference type="ChEBI" id="CHEBI:57792"/>
        <dbReference type="ChEBI" id="CHEBI:58262"/>
        <dbReference type="ChEBI" id="CHEBI:58349"/>
        <dbReference type="EC" id="1.1.1.267"/>
    </reaction>
    <physiologicalReaction direction="right-to-left" evidence="1">
        <dbReference type="Rhea" id="RHEA:13719"/>
    </physiologicalReaction>
</comment>
<comment type="cofactor">
    <cofactor evidence="1">
        <name>Mg(2+)</name>
        <dbReference type="ChEBI" id="CHEBI:18420"/>
    </cofactor>
    <cofactor evidence="1">
        <name>Mn(2+)</name>
        <dbReference type="ChEBI" id="CHEBI:29035"/>
    </cofactor>
</comment>
<comment type="pathway">
    <text evidence="1">Isoprenoid biosynthesis; isopentenyl diphosphate biosynthesis via DXP pathway; isopentenyl diphosphate from 1-deoxy-D-xylulose 5-phosphate: step 1/6.</text>
</comment>
<comment type="similarity">
    <text evidence="1">Belongs to the DXR family.</text>
</comment>
<name>DXR_RHOPB</name>
<protein>
    <recommendedName>
        <fullName evidence="1">1-deoxy-D-xylulose 5-phosphate reductoisomerase</fullName>
        <shortName evidence="1">DXP reductoisomerase</shortName>
        <ecNumber evidence="1">1.1.1.267</ecNumber>
    </recommendedName>
    <alternativeName>
        <fullName evidence="1">1-deoxyxylulose-5-phosphate reductoisomerase</fullName>
    </alternativeName>
    <alternativeName>
        <fullName evidence="1">2-C-methyl-D-erythritol 4-phosphate synthase</fullName>
    </alternativeName>
</protein>
<feature type="chain" id="PRO_1000020301" description="1-deoxy-D-xylulose 5-phosphate reductoisomerase">
    <location>
        <begin position="1"/>
        <end position="407"/>
    </location>
</feature>
<feature type="binding site" evidence="1">
    <location>
        <position position="25"/>
    </location>
    <ligand>
        <name>NADPH</name>
        <dbReference type="ChEBI" id="CHEBI:57783"/>
    </ligand>
</feature>
<feature type="binding site" evidence="1">
    <location>
        <position position="26"/>
    </location>
    <ligand>
        <name>NADPH</name>
        <dbReference type="ChEBI" id="CHEBI:57783"/>
    </ligand>
</feature>
<feature type="binding site" evidence="1">
    <location>
        <position position="27"/>
    </location>
    <ligand>
        <name>NADPH</name>
        <dbReference type="ChEBI" id="CHEBI:57783"/>
    </ligand>
</feature>
<feature type="binding site" evidence="1">
    <location>
        <position position="28"/>
    </location>
    <ligand>
        <name>NADPH</name>
        <dbReference type="ChEBI" id="CHEBI:57783"/>
    </ligand>
</feature>
<feature type="binding site" evidence="1">
    <location>
        <position position="53"/>
    </location>
    <ligand>
        <name>NADPH</name>
        <dbReference type="ChEBI" id="CHEBI:57783"/>
    </ligand>
</feature>
<feature type="binding site" evidence="1">
    <location>
        <position position="136"/>
    </location>
    <ligand>
        <name>NADPH</name>
        <dbReference type="ChEBI" id="CHEBI:57783"/>
    </ligand>
</feature>
<feature type="binding site" evidence="1">
    <location>
        <position position="137"/>
    </location>
    <ligand>
        <name>1-deoxy-D-xylulose 5-phosphate</name>
        <dbReference type="ChEBI" id="CHEBI:57792"/>
    </ligand>
</feature>
<feature type="binding site" evidence="1">
    <location>
        <position position="138"/>
    </location>
    <ligand>
        <name>NADPH</name>
        <dbReference type="ChEBI" id="CHEBI:57783"/>
    </ligand>
</feature>
<feature type="binding site" evidence="1">
    <location>
        <position position="162"/>
    </location>
    <ligand>
        <name>Mn(2+)</name>
        <dbReference type="ChEBI" id="CHEBI:29035"/>
    </ligand>
</feature>
<feature type="binding site" evidence="1">
    <location>
        <position position="163"/>
    </location>
    <ligand>
        <name>1-deoxy-D-xylulose 5-phosphate</name>
        <dbReference type="ChEBI" id="CHEBI:57792"/>
    </ligand>
</feature>
<feature type="binding site" evidence="1">
    <location>
        <position position="164"/>
    </location>
    <ligand>
        <name>1-deoxy-D-xylulose 5-phosphate</name>
        <dbReference type="ChEBI" id="CHEBI:57792"/>
    </ligand>
</feature>
<feature type="binding site" evidence="1">
    <location>
        <position position="164"/>
    </location>
    <ligand>
        <name>Mn(2+)</name>
        <dbReference type="ChEBI" id="CHEBI:29035"/>
    </ligand>
</feature>
<feature type="binding site" evidence="1">
    <location>
        <position position="188"/>
    </location>
    <ligand>
        <name>1-deoxy-D-xylulose 5-phosphate</name>
        <dbReference type="ChEBI" id="CHEBI:57792"/>
    </ligand>
</feature>
<feature type="binding site" evidence="1">
    <location>
        <position position="211"/>
    </location>
    <ligand>
        <name>1-deoxy-D-xylulose 5-phosphate</name>
        <dbReference type="ChEBI" id="CHEBI:57792"/>
    </ligand>
</feature>
<feature type="binding site" evidence="1">
    <location>
        <position position="217"/>
    </location>
    <ligand>
        <name>NADPH</name>
        <dbReference type="ChEBI" id="CHEBI:57783"/>
    </ligand>
</feature>
<feature type="binding site" evidence="1">
    <location>
        <position position="224"/>
    </location>
    <ligand>
        <name>1-deoxy-D-xylulose 5-phosphate</name>
        <dbReference type="ChEBI" id="CHEBI:57792"/>
    </ligand>
</feature>
<feature type="binding site" evidence="1">
    <location>
        <position position="229"/>
    </location>
    <ligand>
        <name>1-deoxy-D-xylulose 5-phosphate</name>
        <dbReference type="ChEBI" id="CHEBI:57792"/>
    </ligand>
</feature>
<feature type="binding site" evidence="1">
    <location>
        <position position="230"/>
    </location>
    <ligand>
        <name>1-deoxy-D-xylulose 5-phosphate</name>
        <dbReference type="ChEBI" id="CHEBI:57792"/>
    </ligand>
</feature>
<feature type="binding site" evidence="1">
    <location>
        <position position="233"/>
    </location>
    <ligand>
        <name>1-deoxy-D-xylulose 5-phosphate</name>
        <dbReference type="ChEBI" id="CHEBI:57792"/>
    </ligand>
</feature>
<feature type="binding site" evidence="1">
    <location>
        <position position="233"/>
    </location>
    <ligand>
        <name>Mn(2+)</name>
        <dbReference type="ChEBI" id="CHEBI:29035"/>
    </ligand>
</feature>
<keyword id="KW-0414">Isoprene biosynthesis</keyword>
<keyword id="KW-0464">Manganese</keyword>
<keyword id="KW-0479">Metal-binding</keyword>
<keyword id="KW-0521">NADP</keyword>
<keyword id="KW-0560">Oxidoreductase</keyword>
<accession>Q215E3</accession>